<reference key="1">
    <citation type="journal article" date="2009" name="BMC Genomics">
        <title>Evidence for niche adaptation in the genome of the bovine pathogen Streptococcus uberis.</title>
        <authorList>
            <person name="Ward P.N."/>
            <person name="Holden M.T.G."/>
            <person name="Leigh J.A."/>
            <person name="Lennard N."/>
            <person name="Bignell A."/>
            <person name="Barron A."/>
            <person name="Clark L."/>
            <person name="Quail M.A."/>
            <person name="Woodward J."/>
            <person name="Barrell B.G."/>
            <person name="Egan S.A."/>
            <person name="Field T.R."/>
            <person name="Maskell D."/>
            <person name="Kehoe M."/>
            <person name="Dowson C.G."/>
            <person name="Chanter N."/>
            <person name="Whatmore A.M."/>
            <person name="Bentley S.D."/>
            <person name="Parkhill J."/>
        </authorList>
    </citation>
    <scope>NUCLEOTIDE SEQUENCE [LARGE SCALE GENOMIC DNA]</scope>
    <source>
        <strain>ATCC BAA-854 / 0140J</strain>
    </source>
</reference>
<feature type="chain" id="PRO_1000146215" description="D-aminoacyl-tRNA deacylase">
    <location>
        <begin position="1"/>
        <end position="147"/>
    </location>
</feature>
<feature type="short sequence motif" description="Gly-cisPro motif, important for rejection of L-amino acids" evidence="1">
    <location>
        <begin position="136"/>
        <end position="137"/>
    </location>
</feature>
<proteinExistence type="inferred from homology"/>
<gene>
    <name evidence="1" type="primary">dtd</name>
    <name type="ordered locus">SUB0243</name>
</gene>
<keyword id="KW-0963">Cytoplasm</keyword>
<keyword id="KW-0378">Hydrolase</keyword>
<keyword id="KW-1185">Reference proteome</keyword>
<keyword id="KW-0694">RNA-binding</keyword>
<keyword id="KW-0820">tRNA-binding</keyword>
<evidence type="ECO:0000255" key="1">
    <source>
        <dbReference type="HAMAP-Rule" id="MF_00518"/>
    </source>
</evidence>
<dbReference type="EC" id="3.1.1.96" evidence="1"/>
<dbReference type="EMBL" id="AM946015">
    <property type="protein sequence ID" value="CAR40754.1"/>
    <property type="molecule type" value="Genomic_DNA"/>
</dbReference>
<dbReference type="RefSeq" id="WP_012657793.1">
    <property type="nucleotide sequence ID" value="NC_012004.1"/>
</dbReference>
<dbReference type="SMR" id="B9DTB9"/>
<dbReference type="STRING" id="218495.SUB0243"/>
<dbReference type="GeneID" id="93825536"/>
<dbReference type="KEGG" id="sub:SUB0243"/>
<dbReference type="eggNOG" id="COG1490">
    <property type="taxonomic scope" value="Bacteria"/>
</dbReference>
<dbReference type="HOGENOM" id="CLU_076901_1_0_9"/>
<dbReference type="OrthoDB" id="9801395at2"/>
<dbReference type="Proteomes" id="UP000000449">
    <property type="component" value="Chromosome"/>
</dbReference>
<dbReference type="GO" id="GO:0005737">
    <property type="term" value="C:cytoplasm"/>
    <property type="evidence" value="ECO:0007669"/>
    <property type="project" value="UniProtKB-SubCell"/>
</dbReference>
<dbReference type="GO" id="GO:0051500">
    <property type="term" value="F:D-tyrosyl-tRNA(Tyr) deacylase activity"/>
    <property type="evidence" value="ECO:0007669"/>
    <property type="project" value="TreeGrafter"/>
</dbReference>
<dbReference type="GO" id="GO:0106026">
    <property type="term" value="F:Gly-tRNA(Ala) deacylase activity"/>
    <property type="evidence" value="ECO:0007669"/>
    <property type="project" value="UniProtKB-UniRule"/>
</dbReference>
<dbReference type="GO" id="GO:0043908">
    <property type="term" value="F:Ser(Gly)-tRNA(Ala) hydrolase activity"/>
    <property type="evidence" value="ECO:0007669"/>
    <property type="project" value="UniProtKB-UniRule"/>
</dbReference>
<dbReference type="GO" id="GO:0000049">
    <property type="term" value="F:tRNA binding"/>
    <property type="evidence" value="ECO:0007669"/>
    <property type="project" value="UniProtKB-UniRule"/>
</dbReference>
<dbReference type="GO" id="GO:0019478">
    <property type="term" value="P:D-amino acid catabolic process"/>
    <property type="evidence" value="ECO:0007669"/>
    <property type="project" value="UniProtKB-UniRule"/>
</dbReference>
<dbReference type="CDD" id="cd00563">
    <property type="entry name" value="Dtyr_deacylase"/>
    <property type="match status" value="1"/>
</dbReference>
<dbReference type="FunFam" id="3.50.80.10:FF:000001">
    <property type="entry name" value="D-aminoacyl-tRNA deacylase"/>
    <property type="match status" value="1"/>
</dbReference>
<dbReference type="Gene3D" id="3.50.80.10">
    <property type="entry name" value="D-tyrosyl-tRNA(Tyr) deacylase"/>
    <property type="match status" value="1"/>
</dbReference>
<dbReference type="HAMAP" id="MF_00518">
    <property type="entry name" value="Deacylase_Dtd"/>
    <property type="match status" value="1"/>
</dbReference>
<dbReference type="InterPro" id="IPR003732">
    <property type="entry name" value="Daa-tRNA_deacyls_DTD"/>
</dbReference>
<dbReference type="InterPro" id="IPR023509">
    <property type="entry name" value="DTD-like_sf"/>
</dbReference>
<dbReference type="NCBIfam" id="TIGR00256">
    <property type="entry name" value="D-aminoacyl-tRNA deacylase"/>
    <property type="match status" value="1"/>
</dbReference>
<dbReference type="PANTHER" id="PTHR10472:SF5">
    <property type="entry name" value="D-AMINOACYL-TRNA DEACYLASE 1"/>
    <property type="match status" value="1"/>
</dbReference>
<dbReference type="PANTHER" id="PTHR10472">
    <property type="entry name" value="D-TYROSYL-TRNA TYR DEACYLASE"/>
    <property type="match status" value="1"/>
</dbReference>
<dbReference type="Pfam" id="PF02580">
    <property type="entry name" value="Tyr_Deacylase"/>
    <property type="match status" value="1"/>
</dbReference>
<dbReference type="SUPFAM" id="SSF69500">
    <property type="entry name" value="DTD-like"/>
    <property type="match status" value="1"/>
</dbReference>
<protein>
    <recommendedName>
        <fullName evidence="1">D-aminoacyl-tRNA deacylase</fullName>
        <shortName evidence="1">DTD</shortName>
        <ecNumber evidence="1">3.1.1.96</ecNumber>
    </recommendedName>
    <alternativeName>
        <fullName evidence="1">Gly-tRNA(Ala) deacylase</fullName>
    </alternativeName>
</protein>
<comment type="function">
    <text evidence="1">An aminoacyl-tRNA editing enzyme that deacylates mischarged D-aminoacyl-tRNAs. Also deacylates mischarged glycyl-tRNA(Ala), protecting cells against glycine mischarging by AlaRS. Acts via tRNA-based rather than protein-based catalysis; rejects L-amino acids rather than detecting D-amino acids in the active site. By recycling D-aminoacyl-tRNA to D-amino acids and free tRNA molecules, this enzyme counteracts the toxicity associated with the formation of D-aminoacyl-tRNA entities in vivo and helps enforce protein L-homochirality.</text>
</comment>
<comment type="catalytic activity">
    <reaction evidence="1">
        <text>glycyl-tRNA(Ala) + H2O = tRNA(Ala) + glycine + H(+)</text>
        <dbReference type="Rhea" id="RHEA:53744"/>
        <dbReference type="Rhea" id="RHEA-COMP:9657"/>
        <dbReference type="Rhea" id="RHEA-COMP:13640"/>
        <dbReference type="ChEBI" id="CHEBI:15377"/>
        <dbReference type="ChEBI" id="CHEBI:15378"/>
        <dbReference type="ChEBI" id="CHEBI:57305"/>
        <dbReference type="ChEBI" id="CHEBI:78442"/>
        <dbReference type="ChEBI" id="CHEBI:78522"/>
        <dbReference type="EC" id="3.1.1.96"/>
    </reaction>
</comment>
<comment type="catalytic activity">
    <reaction evidence="1">
        <text>a D-aminoacyl-tRNA + H2O = a tRNA + a D-alpha-amino acid + H(+)</text>
        <dbReference type="Rhea" id="RHEA:13953"/>
        <dbReference type="Rhea" id="RHEA-COMP:10123"/>
        <dbReference type="Rhea" id="RHEA-COMP:10124"/>
        <dbReference type="ChEBI" id="CHEBI:15377"/>
        <dbReference type="ChEBI" id="CHEBI:15378"/>
        <dbReference type="ChEBI" id="CHEBI:59871"/>
        <dbReference type="ChEBI" id="CHEBI:78442"/>
        <dbReference type="ChEBI" id="CHEBI:79333"/>
        <dbReference type="EC" id="3.1.1.96"/>
    </reaction>
</comment>
<comment type="subunit">
    <text evidence="1">Homodimer.</text>
</comment>
<comment type="subcellular location">
    <subcellularLocation>
        <location evidence="1">Cytoplasm</location>
    </subcellularLocation>
</comment>
<comment type="domain">
    <text evidence="1">A Gly-cisPro motif from one monomer fits into the active site of the other monomer to allow specific chiral rejection of L-amino acids.</text>
</comment>
<comment type="similarity">
    <text evidence="1">Belongs to the DTD family.</text>
</comment>
<name>DTD_STRU0</name>
<sequence length="147" mass="16084">MKIVIQRVSEASVAIEGEIVGAIQKGLLLLVGFGPEDGQEDVDYAVRKITQMRIFSDAEDKMNLSLLDIKGSILSISQFTLFANTKKGNRPAFTEAAKPEMASQLYEQFNQALSAFCPLERGVFGADMKVSLVNDGPVTIILDTKNR</sequence>
<accession>B9DTB9</accession>
<organism>
    <name type="scientific">Streptococcus uberis (strain ATCC BAA-854 / 0140J)</name>
    <dbReference type="NCBI Taxonomy" id="218495"/>
    <lineage>
        <taxon>Bacteria</taxon>
        <taxon>Bacillati</taxon>
        <taxon>Bacillota</taxon>
        <taxon>Bacilli</taxon>
        <taxon>Lactobacillales</taxon>
        <taxon>Streptococcaceae</taxon>
        <taxon>Streptococcus</taxon>
    </lineage>
</organism>